<sequence>MLSIVYPSWIRPEIIPSFPYFRWYGFMYVVAFSIAYILFRYQVRRGELDKWSRVSEPVTQDDIMSFFTWTILGILIGARVFSTMVYEVDLLYMRKPWLIFWPFSLQTGEWVGLRGMSYHGGLIGALVGGGLWTQSHGRSFLAWADVAAASTPLGYTFGRIGNFLNAELYGRITDIPIGMIFPNVPLSDMFPASEPWVREFAQRVGIHVQEGARLVNLPRHPSQIYEAFFEGIVLWCILWCARRVKTYNGFLVCLYVVGYGVFRFFIEYFRQPDAHLGYRFSATQSSPIYLFQSWSDVSTGQILCVLMILAGLGGMFALSAYHKRDSVRKARV</sequence>
<reference key="1">
    <citation type="journal article" date="1998" name="Science">
        <title>Complete genome sequence of Treponema pallidum, the syphilis spirochete.</title>
        <authorList>
            <person name="Fraser C.M."/>
            <person name="Norris S.J."/>
            <person name="Weinstock G.M."/>
            <person name="White O."/>
            <person name="Sutton G.G."/>
            <person name="Dodson R.J."/>
            <person name="Gwinn M.L."/>
            <person name="Hickey E.K."/>
            <person name="Clayton R.A."/>
            <person name="Ketchum K.A."/>
            <person name="Sodergren E."/>
            <person name="Hardham J.M."/>
            <person name="McLeod M.P."/>
            <person name="Salzberg S.L."/>
            <person name="Peterson J.D."/>
            <person name="Khalak H.G."/>
            <person name="Richardson D.L."/>
            <person name="Howell J.K."/>
            <person name="Chidambaram M."/>
            <person name="Utterback T.R."/>
            <person name="McDonald L.A."/>
            <person name="Artiach P."/>
            <person name="Bowman C."/>
            <person name="Cotton M.D."/>
            <person name="Fujii C."/>
            <person name="Garland S.A."/>
            <person name="Hatch B."/>
            <person name="Horst K."/>
            <person name="Roberts K.M."/>
            <person name="Sandusky M."/>
            <person name="Weidman J.F."/>
            <person name="Smith H.O."/>
            <person name="Venter J.C."/>
        </authorList>
    </citation>
    <scope>NUCLEOTIDE SEQUENCE [LARGE SCALE GENOMIC DNA]</scope>
    <source>
        <strain>Nichols</strain>
    </source>
</reference>
<gene>
    <name evidence="1" type="primary">lgt</name>
    <name type="ordered locus">TP_0852</name>
</gene>
<comment type="function">
    <text evidence="1">Catalyzes the transfer of the diacylglyceryl group from phosphatidylglycerol to the sulfhydryl group of the N-terminal cysteine of a prolipoprotein, the first step in the formation of mature lipoproteins.</text>
</comment>
<comment type="catalytic activity">
    <reaction evidence="1">
        <text>L-cysteinyl-[prolipoprotein] + a 1,2-diacyl-sn-glycero-3-phospho-(1'-sn-glycerol) = an S-1,2-diacyl-sn-glyceryl-L-cysteinyl-[prolipoprotein] + sn-glycerol 1-phosphate + H(+)</text>
        <dbReference type="Rhea" id="RHEA:56712"/>
        <dbReference type="Rhea" id="RHEA-COMP:14679"/>
        <dbReference type="Rhea" id="RHEA-COMP:14680"/>
        <dbReference type="ChEBI" id="CHEBI:15378"/>
        <dbReference type="ChEBI" id="CHEBI:29950"/>
        <dbReference type="ChEBI" id="CHEBI:57685"/>
        <dbReference type="ChEBI" id="CHEBI:64716"/>
        <dbReference type="ChEBI" id="CHEBI:140658"/>
        <dbReference type="EC" id="2.5.1.145"/>
    </reaction>
</comment>
<comment type="pathway">
    <text evidence="1">Protein modification; lipoprotein biosynthesis (diacylglyceryl transfer).</text>
</comment>
<comment type="subcellular location">
    <subcellularLocation>
        <location evidence="1">Cell inner membrane</location>
        <topology evidence="1">Multi-pass membrane protein</topology>
    </subcellularLocation>
</comment>
<comment type="similarity">
    <text evidence="1 2">Belongs to the Lgt family.</text>
</comment>
<evidence type="ECO:0000255" key="1">
    <source>
        <dbReference type="HAMAP-Rule" id="MF_01147"/>
    </source>
</evidence>
<evidence type="ECO:0000305" key="2"/>
<organism>
    <name type="scientific">Treponema pallidum (strain Nichols)</name>
    <dbReference type="NCBI Taxonomy" id="243276"/>
    <lineage>
        <taxon>Bacteria</taxon>
        <taxon>Pseudomonadati</taxon>
        <taxon>Spirochaetota</taxon>
        <taxon>Spirochaetia</taxon>
        <taxon>Spirochaetales</taxon>
        <taxon>Treponemataceae</taxon>
        <taxon>Treponema</taxon>
    </lineage>
</organism>
<proteinExistence type="inferred from homology"/>
<protein>
    <recommendedName>
        <fullName evidence="1">Phosphatidylglycerol--prolipoprotein diacylglyceryl transferase</fullName>
        <ecNumber evidence="1">2.5.1.145</ecNumber>
    </recommendedName>
</protein>
<accession>O83824</accession>
<dbReference type="EC" id="2.5.1.145" evidence="1"/>
<dbReference type="EMBL" id="AE000520">
    <property type="protein sequence ID" value="AAC65817.1"/>
    <property type="molecule type" value="Genomic_DNA"/>
</dbReference>
<dbReference type="PIR" id="D71274">
    <property type="entry name" value="D71274"/>
</dbReference>
<dbReference type="RefSeq" id="WP_010882296.1">
    <property type="nucleotide sequence ID" value="NC_021490.2"/>
</dbReference>
<dbReference type="SMR" id="O83824"/>
<dbReference type="STRING" id="243276.TP_0852"/>
<dbReference type="EnsemblBacteria" id="AAC65817">
    <property type="protein sequence ID" value="AAC65817"/>
    <property type="gene ID" value="TP_0852"/>
</dbReference>
<dbReference type="GeneID" id="93876610"/>
<dbReference type="KEGG" id="tpa:TP_0852"/>
<dbReference type="KEGG" id="tpw:TPANIC_0852"/>
<dbReference type="eggNOG" id="COG0682">
    <property type="taxonomic scope" value="Bacteria"/>
</dbReference>
<dbReference type="HOGENOM" id="CLU_013386_1_0_12"/>
<dbReference type="OrthoDB" id="871140at2"/>
<dbReference type="UniPathway" id="UPA00664"/>
<dbReference type="Proteomes" id="UP000000811">
    <property type="component" value="Chromosome"/>
</dbReference>
<dbReference type="GO" id="GO:0005886">
    <property type="term" value="C:plasma membrane"/>
    <property type="evidence" value="ECO:0007669"/>
    <property type="project" value="UniProtKB-SubCell"/>
</dbReference>
<dbReference type="GO" id="GO:0008961">
    <property type="term" value="F:phosphatidylglycerol-prolipoprotein diacylglyceryl transferase activity"/>
    <property type="evidence" value="ECO:0007669"/>
    <property type="project" value="UniProtKB-UniRule"/>
</dbReference>
<dbReference type="GO" id="GO:0042158">
    <property type="term" value="P:lipoprotein biosynthetic process"/>
    <property type="evidence" value="ECO:0007669"/>
    <property type="project" value="UniProtKB-UniRule"/>
</dbReference>
<dbReference type="HAMAP" id="MF_01147">
    <property type="entry name" value="Lgt"/>
    <property type="match status" value="1"/>
</dbReference>
<dbReference type="InterPro" id="IPR001640">
    <property type="entry name" value="Lgt"/>
</dbReference>
<dbReference type="NCBIfam" id="TIGR00544">
    <property type="entry name" value="lgt"/>
    <property type="match status" value="1"/>
</dbReference>
<dbReference type="PANTHER" id="PTHR30589:SF0">
    <property type="entry name" value="PHOSPHATIDYLGLYCEROL--PROLIPOPROTEIN DIACYLGLYCERYL TRANSFERASE"/>
    <property type="match status" value="1"/>
</dbReference>
<dbReference type="PANTHER" id="PTHR30589">
    <property type="entry name" value="PROLIPOPROTEIN DIACYLGLYCERYL TRANSFERASE"/>
    <property type="match status" value="1"/>
</dbReference>
<dbReference type="Pfam" id="PF01790">
    <property type="entry name" value="LGT"/>
    <property type="match status" value="1"/>
</dbReference>
<dbReference type="PROSITE" id="PS01311">
    <property type="entry name" value="LGT"/>
    <property type="match status" value="1"/>
</dbReference>
<name>LGT_TREPA</name>
<feature type="chain" id="PRO_0000172706" description="Phosphatidylglycerol--prolipoprotein diacylglyceryl transferase">
    <location>
        <begin position="1"/>
        <end position="332"/>
    </location>
</feature>
<feature type="transmembrane region" description="Helical" evidence="1">
    <location>
        <begin position="18"/>
        <end position="38"/>
    </location>
</feature>
<feature type="transmembrane region" description="Helical" evidence="1">
    <location>
        <begin position="66"/>
        <end position="86"/>
    </location>
</feature>
<feature type="transmembrane region" description="Helical" evidence="1">
    <location>
        <begin position="111"/>
        <end position="131"/>
    </location>
</feature>
<feature type="transmembrane region" description="Helical" evidence="1">
    <location>
        <begin position="249"/>
        <end position="269"/>
    </location>
</feature>
<feature type="transmembrane region" description="Helical" evidence="1">
    <location>
        <begin position="302"/>
        <end position="322"/>
    </location>
</feature>
<feature type="binding site" evidence="1">
    <location>
        <position position="159"/>
    </location>
    <ligand>
        <name>a 1,2-diacyl-sn-glycero-3-phospho-(1'-sn-glycerol)</name>
        <dbReference type="ChEBI" id="CHEBI:64716"/>
    </ligand>
</feature>
<keyword id="KW-0997">Cell inner membrane</keyword>
<keyword id="KW-1003">Cell membrane</keyword>
<keyword id="KW-0472">Membrane</keyword>
<keyword id="KW-1185">Reference proteome</keyword>
<keyword id="KW-0808">Transferase</keyword>
<keyword id="KW-0812">Transmembrane</keyword>
<keyword id="KW-1133">Transmembrane helix</keyword>